<organismHost>
    <name type="scientific">Bos taurus</name>
    <name type="common">Bovine</name>
    <dbReference type="NCBI Taxonomy" id="9913"/>
</organismHost>
<accession>Q65695</accession>
<accession>Q77KZ3</accession>
<accession>Q77L03</accession>
<gene>
    <name type="primary">1B</name>
    <name type="synonym">NS2</name>
</gene>
<organism>
    <name type="scientific">Bovine respiratory syncytial virus (strain A51908)</name>
    <name type="common">BRS</name>
    <dbReference type="NCBI Taxonomy" id="11247"/>
    <lineage>
        <taxon>Viruses</taxon>
        <taxon>Riboviria</taxon>
        <taxon>Orthornavirae</taxon>
        <taxon>Negarnaviricota</taxon>
        <taxon>Haploviricotina</taxon>
        <taxon>Monjiviricetes</taxon>
        <taxon>Mononegavirales</taxon>
        <taxon>Pneumoviridae</taxon>
        <taxon>Orthopneumovirus</taxon>
        <taxon>Orthopneumovirus bovis</taxon>
        <taxon>bovine respiratory syncytial virus</taxon>
    </lineage>
</organism>
<reference key="1">
    <citation type="journal article" date="1995" name="J. Gen. Virol.">
        <title>Nucleotide sequence analysis of the non-structural NS1 (1C) and NS2 (1B) protein genes of bovine respiratory syncytial virus.</title>
        <authorList>
            <person name="Pastey M.K."/>
            <person name="Samal S.K."/>
        </authorList>
    </citation>
    <scope>NUCLEOTIDE SEQUENCE [MRNA]</scope>
</reference>
<reference key="2">
    <citation type="journal article" date="2001" name="Virus Genes">
        <title>Rescue of bovine respiratory syncytial virus from cloned cDNA: entire genome sequence of BRSV strain A51908.</title>
        <authorList>
            <person name="Yunus A.S."/>
            <person name="Khattar S.K."/>
            <person name="Collins P.L."/>
            <person name="Samal S.K."/>
        </authorList>
    </citation>
    <scope>NUCLEOTIDE SEQUENCE</scope>
    <source>
        <strain>A51908</strain>
        <strain>ATCC 51908</strain>
    </source>
</reference>
<protein>
    <recommendedName>
        <fullName>Non-structural protein 2</fullName>
        <shortName>NS2</shortName>
    </recommendedName>
    <alternativeName>
        <fullName>Non-structural protein 1B</fullName>
    </alternativeName>
</protein>
<comment type="function">
    <text evidence="1">Plays a major role in antagonizing the type I IFN-mediated antiviral response. Acts cooperatively with NS1 to repress activation and nuclear translocation of host IFN-regulatory factor IRF3. Interacts with the host cytoplasmic sensor of viral nucleic acids RIGI and prevents the interaction with its downstream partner MAVS. Together with NS2, participates in the proteasomal degradation of host STAT2, IRF3, IRF7, TBK1 and RIGI through a NS-degradasome involving CUL2 and Elongin-C. The degradasome requires an intact mitochondrial MAVS. Induces host SOCS1 expression. Induces activation of NF-kappa-B. Suppresses premature apoptosis by an NF-kappa-B-dependent, interferon-independent mechanism promoting continued viral replication.</text>
</comment>
<comment type="subunit">
    <text evidence="1">Monomer (instable). Homomultimer. Heteromultimer with NS1. Interacts with host RIGI (via N-terminus); this interaction prevents host signaling pathway involved in interferon production. Interacts with host MAP1B/microtubule-associated protein 1B.</text>
</comment>
<comment type="subcellular location">
    <subcellularLocation>
        <location evidence="1">Host mitochondrion</location>
    </subcellularLocation>
    <text evidence="1">Most NS2 resides in the mitochondria as a heteromer with NS1.</text>
</comment>
<comment type="domain">
    <text evidence="1">The DNLP motif has IFN suppressive functions like binding to host MAP1B.</text>
</comment>
<comment type="similarity">
    <text evidence="2">Belongs to the pneumovirus non-structural protein 2 family.</text>
</comment>
<proteinExistence type="evidence at transcript level"/>
<name>NS2_BRSVA</name>
<evidence type="ECO:0000250" key="1">
    <source>
        <dbReference type="UniProtKB" id="P04543"/>
    </source>
</evidence>
<evidence type="ECO:0000305" key="2"/>
<sequence length="124" mass="14576">MSTPNPETTAQRLIVNDIRPLSIETEIISLTKDIITHTFIYLINHECIVRKLDERQATFTFLVNYEMKLLHKVGSTKYNKYTEYNRKYGTLPMPIFINHDGFLECIGIKPTRHTPIIYKYDLNP</sequence>
<keyword id="KW-1045">Host mitochondrion</keyword>
<keyword id="KW-0945">Host-virus interaction</keyword>
<keyword id="KW-1090">Inhibition of host innate immune response by virus</keyword>
<keyword id="KW-1114">Inhibition of host interferon signaling pathway by virus</keyword>
<keyword id="KW-1092">Inhibition of host IRF3 by virus</keyword>
<keyword id="KW-1093">Inhibition of host IRF7 by virus</keyword>
<keyword id="KW-1088">Inhibition of host RIG-I by virus</keyword>
<keyword id="KW-1113">Inhibition of host RLR pathway by virus</keyword>
<keyword id="KW-1106">Inhibition of host STAT2 by virus</keyword>
<keyword id="KW-1223">Inhibition of host TBK1 by virus</keyword>
<keyword id="KW-1225">Inhibition of host TLR pathway by virus</keyword>
<keyword id="KW-0922">Interferon antiviral system evasion</keyword>
<keyword id="KW-1119">Modulation of host cell apoptosis by virus</keyword>
<keyword id="KW-1185">Reference proteome</keyword>
<keyword id="KW-0899">Viral immunoevasion</keyword>
<feature type="chain" id="PRO_0000142786" description="Non-structural protein 2">
    <location>
        <begin position="1"/>
        <end position="124"/>
    </location>
</feature>
<feature type="short sequence motif" description="DLNP; interaction with MAP1B" evidence="1">
    <location>
        <begin position="121"/>
        <end position="124"/>
    </location>
</feature>
<feature type="sequence variant" description="In strain: ATCC 51908.">
    <original>I</original>
    <variation>M</variation>
    <location>
        <position position="18"/>
    </location>
</feature>
<feature type="sequence variant" description="In strain: ATCC 51908.">
    <original>L</original>
    <variation>F</variation>
    <location>
        <position position="91"/>
    </location>
</feature>
<feature type="sequence variant" description="In strain: ATCC 51908.">
    <original>H</original>
    <variation>N</variation>
    <location>
        <position position="113"/>
    </location>
</feature>
<dbReference type="EMBL" id="U15938">
    <property type="protein sequence ID" value="AAA85672.1"/>
    <property type="molecule type" value="mRNA"/>
</dbReference>
<dbReference type="EMBL" id="AF295543">
    <property type="protein sequence ID" value="AAL49393.1"/>
    <property type="molecule type" value="Genomic_RNA"/>
</dbReference>
<dbReference type="EMBL" id="AF295544">
    <property type="protein sequence ID" value="AAL49404.1"/>
    <property type="molecule type" value="Genomic_RNA"/>
</dbReference>
<dbReference type="SMR" id="Q65695"/>
<dbReference type="Proteomes" id="UP000007616">
    <property type="component" value="Genome"/>
</dbReference>
<dbReference type="GO" id="GO:0033650">
    <property type="term" value="C:host cell mitochondrion"/>
    <property type="evidence" value="ECO:0007669"/>
    <property type="project" value="UniProtKB-SubCell"/>
</dbReference>
<dbReference type="GO" id="GO:0052150">
    <property type="term" value="P:symbiont-mediated perturbation of host apoptosis"/>
    <property type="evidence" value="ECO:0007669"/>
    <property type="project" value="UniProtKB-KW"/>
</dbReference>
<dbReference type="GO" id="GO:0039548">
    <property type="term" value="P:symbiont-mediated suppression of host cytoplasmic pattern recognition receptor signaling pathway via inhibition of IRF3 activity"/>
    <property type="evidence" value="ECO:0007669"/>
    <property type="project" value="UniProtKB-KW"/>
</dbReference>
<dbReference type="GO" id="GO:0039557">
    <property type="term" value="P:symbiont-mediated suppression of host cytoplasmic pattern recognition receptor signaling pathway via inhibition of IRF7 activity"/>
    <property type="evidence" value="ECO:0007669"/>
    <property type="project" value="UniProtKB-KW"/>
</dbReference>
<dbReference type="GO" id="GO:0039540">
    <property type="term" value="P:symbiont-mediated suppression of host cytoplasmic pattern recognition receptor signaling pathway via inhibition of RIG-I activity"/>
    <property type="evidence" value="ECO:0007669"/>
    <property type="project" value="UniProtKB-KW"/>
</dbReference>
<dbReference type="GO" id="GO:0039723">
    <property type="term" value="P:symbiont-mediated suppression of host cytoplasmic pattern recognition receptor signaling pathway via inhibition of TBK1 activity"/>
    <property type="evidence" value="ECO:0007669"/>
    <property type="project" value="UniProtKB-KW"/>
</dbReference>
<dbReference type="GO" id="GO:0039564">
    <property type="term" value="P:symbiont-mediated suppression of host JAK-STAT cascade via inhibition of STAT2 activity"/>
    <property type="evidence" value="ECO:0007669"/>
    <property type="project" value="UniProtKB-KW"/>
</dbReference>
<dbReference type="GO" id="GO:0039722">
    <property type="term" value="P:symbiont-mediated suppression of host toll-like receptor signaling pathway"/>
    <property type="evidence" value="ECO:0007669"/>
    <property type="project" value="UniProtKB-KW"/>
</dbReference>
<dbReference type="GO" id="GO:0039502">
    <property type="term" value="P:symbiont-mediated suppression of host type I interferon-mediated signaling pathway"/>
    <property type="evidence" value="ECO:0007669"/>
    <property type="project" value="UniProtKB-KW"/>
</dbReference>
<dbReference type="InterPro" id="IPR004336">
    <property type="entry name" value="RSV_NS2"/>
</dbReference>
<dbReference type="Pfam" id="PF03113">
    <property type="entry name" value="RSV_NS2"/>
    <property type="match status" value="1"/>
</dbReference>